<name>FLIW_SHOC1</name>
<protein>
    <recommendedName>
        <fullName evidence="1">Flagellar assembly factor FliW</fullName>
    </recommendedName>
</protein>
<sequence length="146" mass="16572">MQLETSYLGTVKYKQEDIIVFQGGLPGFPEETEFILLPFNEQPPFYILQSVRTKEIGFVCINPFLFWPDYEVELADSVVRQLSAESEQDVAIFVFLTIQQPFSKSTANLRAPIAVHAKKRFAKQLMLDGERYSLKAPIHTAGKGGR</sequence>
<feature type="chain" id="PRO_0000272969" description="Flagellar assembly factor FliW">
    <location>
        <begin position="1"/>
        <end position="146"/>
    </location>
</feature>
<evidence type="ECO:0000255" key="1">
    <source>
        <dbReference type="HAMAP-Rule" id="MF_01185"/>
    </source>
</evidence>
<gene>
    <name evidence="1" type="primary">fliW</name>
    <name type="ordered locus">ABC3077</name>
</gene>
<dbReference type="EMBL" id="AP006627">
    <property type="protein sequence ID" value="BAD65611.1"/>
    <property type="molecule type" value="Genomic_DNA"/>
</dbReference>
<dbReference type="RefSeq" id="WP_011247919.1">
    <property type="nucleotide sequence ID" value="NC_006582.1"/>
</dbReference>
<dbReference type="SMR" id="Q5WDE9"/>
<dbReference type="STRING" id="66692.ABC3077"/>
<dbReference type="KEGG" id="bcl:ABC3077"/>
<dbReference type="eggNOG" id="COG1699">
    <property type="taxonomic scope" value="Bacteria"/>
</dbReference>
<dbReference type="HOGENOM" id="CLU_112356_0_2_9"/>
<dbReference type="OrthoDB" id="9801235at2"/>
<dbReference type="Proteomes" id="UP000001168">
    <property type="component" value="Chromosome"/>
</dbReference>
<dbReference type="GO" id="GO:0005737">
    <property type="term" value="C:cytoplasm"/>
    <property type="evidence" value="ECO:0007669"/>
    <property type="project" value="UniProtKB-SubCell"/>
</dbReference>
<dbReference type="GO" id="GO:0044780">
    <property type="term" value="P:bacterial-type flagellum assembly"/>
    <property type="evidence" value="ECO:0007669"/>
    <property type="project" value="UniProtKB-UniRule"/>
</dbReference>
<dbReference type="GO" id="GO:0006417">
    <property type="term" value="P:regulation of translation"/>
    <property type="evidence" value="ECO:0007669"/>
    <property type="project" value="UniProtKB-KW"/>
</dbReference>
<dbReference type="Gene3D" id="2.30.290.10">
    <property type="entry name" value="BH3618-like"/>
    <property type="match status" value="1"/>
</dbReference>
<dbReference type="HAMAP" id="MF_01185">
    <property type="entry name" value="FliW"/>
    <property type="match status" value="1"/>
</dbReference>
<dbReference type="InterPro" id="IPR003775">
    <property type="entry name" value="Flagellar_assembly_factor_FliW"/>
</dbReference>
<dbReference type="InterPro" id="IPR024046">
    <property type="entry name" value="Flagellar_assmbl_FliW_dom_sf"/>
</dbReference>
<dbReference type="NCBIfam" id="NF009793">
    <property type="entry name" value="PRK13285.1-1"/>
    <property type="match status" value="1"/>
</dbReference>
<dbReference type="PANTHER" id="PTHR39190">
    <property type="entry name" value="FLAGELLAR ASSEMBLY FACTOR FLIW"/>
    <property type="match status" value="1"/>
</dbReference>
<dbReference type="PANTHER" id="PTHR39190:SF1">
    <property type="entry name" value="FLAGELLAR ASSEMBLY FACTOR FLIW"/>
    <property type="match status" value="1"/>
</dbReference>
<dbReference type="Pfam" id="PF02623">
    <property type="entry name" value="FliW"/>
    <property type="match status" value="1"/>
</dbReference>
<dbReference type="SUPFAM" id="SSF141457">
    <property type="entry name" value="BH3618-like"/>
    <property type="match status" value="1"/>
</dbReference>
<comment type="function">
    <text evidence="1">Acts as an anti-CsrA protein, binds CsrA and prevents it from repressing translation of its target genes, one of which is flagellin. Binds to flagellin and participates in the assembly of the flagellum.</text>
</comment>
<comment type="subunit">
    <text evidence="1">Interacts with translational regulator CsrA and flagellin(s).</text>
</comment>
<comment type="subcellular location">
    <subcellularLocation>
        <location evidence="1">Cytoplasm</location>
    </subcellularLocation>
</comment>
<comment type="similarity">
    <text evidence="1">Belongs to the FliW family.</text>
</comment>
<proteinExistence type="inferred from homology"/>
<organism>
    <name type="scientific">Shouchella clausii (strain KSM-K16)</name>
    <name type="common">Alkalihalobacillus clausii</name>
    <dbReference type="NCBI Taxonomy" id="66692"/>
    <lineage>
        <taxon>Bacteria</taxon>
        <taxon>Bacillati</taxon>
        <taxon>Bacillota</taxon>
        <taxon>Bacilli</taxon>
        <taxon>Bacillales</taxon>
        <taxon>Bacillaceae</taxon>
        <taxon>Shouchella</taxon>
    </lineage>
</organism>
<keyword id="KW-1005">Bacterial flagellum biogenesis</keyword>
<keyword id="KW-0143">Chaperone</keyword>
<keyword id="KW-0963">Cytoplasm</keyword>
<keyword id="KW-1185">Reference proteome</keyword>
<keyword id="KW-0810">Translation regulation</keyword>
<reference key="1">
    <citation type="submission" date="2003-10" db="EMBL/GenBank/DDBJ databases">
        <title>The complete genome sequence of the alkaliphilic Bacillus clausii KSM-K16.</title>
        <authorList>
            <person name="Takaki Y."/>
            <person name="Kageyama Y."/>
            <person name="Shimamura S."/>
            <person name="Suzuki H."/>
            <person name="Nishi S."/>
            <person name="Hatada Y."/>
            <person name="Kawai S."/>
            <person name="Ito S."/>
            <person name="Horikoshi K."/>
        </authorList>
    </citation>
    <scope>NUCLEOTIDE SEQUENCE [LARGE SCALE GENOMIC DNA]</scope>
    <source>
        <strain>KSM-K16</strain>
    </source>
</reference>
<accession>Q5WDE9</accession>